<proteinExistence type="inferred from homology"/>
<gene>
    <name evidence="2" type="primary">secA</name>
    <name type="ordered locus">Rmag_0013</name>
</gene>
<keyword id="KW-0067">ATP-binding</keyword>
<keyword id="KW-0997">Cell inner membrane</keyword>
<keyword id="KW-1003">Cell membrane</keyword>
<keyword id="KW-0963">Cytoplasm</keyword>
<keyword id="KW-0472">Membrane</keyword>
<keyword id="KW-0479">Metal-binding</keyword>
<keyword id="KW-0547">Nucleotide-binding</keyword>
<keyword id="KW-0653">Protein transport</keyword>
<keyword id="KW-1278">Translocase</keyword>
<keyword id="KW-0811">Translocation</keyword>
<keyword id="KW-0813">Transport</keyword>
<keyword id="KW-0862">Zinc</keyword>
<organism>
    <name type="scientific">Ruthia magnifica subsp. Calyptogena magnifica</name>
    <dbReference type="NCBI Taxonomy" id="413404"/>
    <lineage>
        <taxon>Bacteria</taxon>
        <taxon>Pseudomonadati</taxon>
        <taxon>Pseudomonadota</taxon>
        <taxon>Gammaproteobacteria</taxon>
        <taxon>Candidatus Pseudothioglobaceae</taxon>
        <taxon>Candidatus Ruthturnera</taxon>
    </lineage>
</organism>
<dbReference type="EC" id="7.4.2.8" evidence="2"/>
<dbReference type="EMBL" id="CP000488">
    <property type="protein sequence ID" value="ABL01817.1"/>
    <property type="molecule type" value="Genomic_DNA"/>
</dbReference>
<dbReference type="RefSeq" id="WP_011737443.1">
    <property type="nucleotide sequence ID" value="NC_008610.1"/>
</dbReference>
<dbReference type="SMR" id="A1AV60"/>
<dbReference type="STRING" id="413404.Rmag_0013"/>
<dbReference type="KEGG" id="rma:Rmag_0013"/>
<dbReference type="eggNOG" id="COG0653">
    <property type="taxonomic scope" value="Bacteria"/>
</dbReference>
<dbReference type="HOGENOM" id="CLU_005314_3_0_6"/>
<dbReference type="OrthoDB" id="9805579at2"/>
<dbReference type="Proteomes" id="UP000002587">
    <property type="component" value="Chromosome"/>
</dbReference>
<dbReference type="GO" id="GO:0031522">
    <property type="term" value="C:cell envelope Sec protein transport complex"/>
    <property type="evidence" value="ECO:0007669"/>
    <property type="project" value="TreeGrafter"/>
</dbReference>
<dbReference type="GO" id="GO:0005829">
    <property type="term" value="C:cytosol"/>
    <property type="evidence" value="ECO:0007669"/>
    <property type="project" value="TreeGrafter"/>
</dbReference>
<dbReference type="GO" id="GO:0005886">
    <property type="term" value="C:plasma membrane"/>
    <property type="evidence" value="ECO:0007669"/>
    <property type="project" value="UniProtKB-SubCell"/>
</dbReference>
<dbReference type="GO" id="GO:0005524">
    <property type="term" value="F:ATP binding"/>
    <property type="evidence" value="ECO:0007669"/>
    <property type="project" value="UniProtKB-UniRule"/>
</dbReference>
<dbReference type="GO" id="GO:0046872">
    <property type="term" value="F:metal ion binding"/>
    <property type="evidence" value="ECO:0007669"/>
    <property type="project" value="UniProtKB-KW"/>
</dbReference>
<dbReference type="GO" id="GO:0008564">
    <property type="term" value="F:protein-exporting ATPase activity"/>
    <property type="evidence" value="ECO:0007669"/>
    <property type="project" value="UniProtKB-EC"/>
</dbReference>
<dbReference type="GO" id="GO:0065002">
    <property type="term" value="P:intracellular protein transmembrane transport"/>
    <property type="evidence" value="ECO:0007669"/>
    <property type="project" value="UniProtKB-UniRule"/>
</dbReference>
<dbReference type="GO" id="GO:0017038">
    <property type="term" value="P:protein import"/>
    <property type="evidence" value="ECO:0007669"/>
    <property type="project" value="InterPro"/>
</dbReference>
<dbReference type="GO" id="GO:0006605">
    <property type="term" value="P:protein targeting"/>
    <property type="evidence" value="ECO:0007669"/>
    <property type="project" value="UniProtKB-UniRule"/>
</dbReference>
<dbReference type="GO" id="GO:0043952">
    <property type="term" value="P:protein transport by the Sec complex"/>
    <property type="evidence" value="ECO:0007669"/>
    <property type="project" value="TreeGrafter"/>
</dbReference>
<dbReference type="CDD" id="cd17928">
    <property type="entry name" value="DEXDc_SecA"/>
    <property type="match status" value="1"/>
</dbReference>
<dbReference type="CDD" id="cd18803">
    <property type="entry name" value="SF2_C_secA"/>
    <property type="match status" value="1"/>
</dbReference>
<dbReference type="FunFam" id="3.40.50.300:FF:000113">
    <property type="entry name" value="Preprotein translocase subunit SecA"/>
    <property type="match status" value="1"/>
</dbReference>
<dbReference type="FunFam" id="3.90.1440.10:FF:000001">
    <property type="entry name" value="Preprotein translocase subunit SecA"/>
    <property type="match status" value="1"/>
</dbReference>
<dbReference type="Gene3D" id="1.10.3060.10">
    <property type="entry name" value="Helical scaffold and wing domains of SecA"/>
    <property type="match status" value="1"/>
</dbReference>
<dbReference type="Gene3D" id="3.40.50.300">
    <property type="entry name" value="P-loop containing nucleotide triphosphate hydrolases"/>
    <property type="match status" value="2"/>
</dbReference>
<dbReference type="Gene3D" id="3.90.1440.10">
    <property type="entry name" value="SecA, preprotein cross-linking domain"/>
    <property type="match status" value="1"/>
</dbReference>
<dbReference type="HAMAP" id="MF_01382">
    <property type="entry name" value="SecA"/>
    <property type="match status" value="1"/>
</dbReference>
<dbReference type="InterPro" id="IPR014001">
    <property type="entry name" value="Helicase_ATP-bd"/>
</dbReference>
<dbReference type="InterPro" id="IPR001650">
    <property type="entry name" value="Helicase_C-like"/>
</dbReference>
<dbReference type="InterPro" id="IPR027417">
    <property type="entry name" value="P-loop_NTPase"/>
</dbReference>
<dbReference type="InterPro" id="IPR004027">
    <property type="entry name" value="SEC_C_motif"/>
</dbReference>
<dbReference type="InterPro" id="IPR000185">
    <property type="entry name" value="SecA"/>
</dbReference>
<dbReference type="InterPro" id="IPR020937">
    <property type="entry name" value="SecA_CS"/>
</dbReference>
<dbReference type="InterPro" id="IPR011115">
    <property type="entry name" value="SecA_DEAD"/>
</dbReference>
<dbReference type="InterPro" id="IPR014018">
    <property type="entry name" value="SecA_motor_DEAD"/>
</dbReference>
<dbReference type="InterPro" id="IPR011130">
    <property type="entry name" value="SecA_preprotein_X-link_dom"/>
</dbReference>
<dbReference type="InterPro" id="IPR044722">
    <property type="entry name" value="SecA_SF2_C"/>
</dbReference>
<dbReference type="InterPro" id="IPR011116">
    <property type="entry name" value="SecA_Wing/Scaffold"/>
</dbReference>
<dbReference type="InterPro" id="IPR036266">
    <property type="entry name" value="SecA_Wing/Scaffold_sf"/>
</dbReference>
<dbReference type="InterPro" id="IPR036670">
    <property type="entry name" value="SecA_X-link_sf"/>
</dbReference>
<dbReference type="NCBIfam" id="NF006630">
    <property type="entry name" value="PRK09200.1"/>
    <property type="match status" value="1"/>
</dbReference>
<dbReference type="NCBIfam" id="NF009538">
    <property type="entry name" value="PRK12904.1"/>
    <property type="match status" value="1"/>
</dbReference>
<dbReference type="NCBIfam" id="TIGR00963">
    <property type="entry name" value="secA"/>
    <property type="match status" value="1"/>
</dbReference>
<dbReference type="PANTHER" id="PTHR30612:SF0">
    <property type="entry name" value="CHLOROPLAST PROTEIN-TRANSPORTING ATPASE"/>
    <property type="match status" value="1"/>
</dbReference>
<dbReference type="PANTHER" id="PTHR30612">
    <property type="entry name" value="SECA INNER MEMBRANE COMPONENT OF SEC PROTEIN SECRETION SYSTEM"/>
    <property type="match status" value="1"/>
</dbReference>
<dbReference type="Pfam" id="PF21090">
    <property type="entry name" value="P-loop_SecA"/>
    <property type="match status" value="1"/>
</dbReference>
<dbReference type="Pfam" id="PF02810">
    <property type="entry name" value="SEC-C"/>
    <property type="match status" value="1"/>
</dbReference>
<dbReference type="Pfam" id="PF07517">
    <property type="entry name" value="SecA_DEAD"/>
    <property type="match status" value="1"/>
</dbReference>
<dbReference type="Pfam" id="PF01043">
    <property type="entry name" value="SecA_PP_bind"/>
    <property type="match status" value="1"/>
</dbReference>
<dbReference type="Pfam" id="PF07516">
    <property type="entry name" value="SecA_SW"/>
    <property type="match status" value="1"/>
</dbReference>
<dbReference type="PRINTS" id="PR00906">
    <property type="entry name" value="SECA"/>
</dbReference>
<dbReference type="SMART" id="SM00957">
    <property type="entry name" value="SecA_DEAD"/>
    <property type="match status" value="1"/>
</dbReference>
<dbReference type="SMART" id="SM00958">
    <property type="entry name" value="SecA_PP_bind"/>
    <property type="match status" value="1"/>
</dbReference>
<dbReference type="SUPFAM" id="SSF81886">
    <property type="entry name" value="Helical scaffold and wing domains of SecA"/>
    <property type="match status" value="1"/>
</dbReference>
<dbReference type="SUPFAM" id="SSF52540">
    <property type="entry name" value="P-loop containing nucleoside triphosphate hydrolases"/>
    <property type="match status" value="2"/>
</dbReference>
<dbReference type="SUPFAM" id="SSF81767">
    <property type="entry name" value="Pre-protein crosslinking domain of SecA"/>
    <property type="match status" value="1"/>
</dbReference>
<dbReference type="PROSITE" id="PS01312">
    <property type="entry name" value="SECA"/>
    <property type="match status" value="1"/>
</dbReference>
<dbReference type="PROSITE" id="PS51196">
    <property type="entry name" value="SECA_MOTOR_DEAD"/>
    <property type="match status" value="1"/>
</dbReference>
<sequence>MSILNKVLSKIIGSRNDRFIKVLYKTVDKITELESKMQALSDEQLKSKTQEFKDRINNKETLDSILVEAFAVIRETSTRVLDLRHHDVQLIGGMVLNDGNIAEMGTGEGKTLVATLPAYLNALSGKGVHIVTVNDYLATRDAQWMGKVFDFLGMSVGVIVSNMAHEDKQSAYLCDIAYATNNELGFDYLRDNMAFTSEQKVQRILNFAIVDEVDSILIDEARTPLIISGPVDDYAQIYQTINHMIPNFTKQIENGEGKEIVIEVAGDYTVDEKHKQVFLTDDGHGKAEHLLIDAEALPEGVSLYDASNILLMQHINSALRAHILFQKDVDYIVQDDEVVIVDEFTGRTMPGRRWSEGLHQAIEAKEGVSIKKENQTLASITFQNYFRLYTTLSGMTGTADTEAVEFQDIYGLETLVVPPNKPSARADKSDKIYLTTQEKFEAIAFDVANCQQIGQPVLVGTSSIENSELISTLLEKNNIKHEVLNAKQHEREAIIIANAGSIGAVTIATNMAGRGTDIVLGGKLSEEATDKQKVDWKIQHDDVIKAGGLHIVGTERNESRRVDNQLRGRAARQGDVGSTRFYLSLEDNLMRIFASKKMASMMQKLGMEKGEAIEHKMVNRAIENAQRKVEGMNYDARKHLLEYDDVASDQRKVIYQLRDDLMSVSDVQDRFISIRVKVIEQFFADYISAELMEEDWDVEGLHNALKLDYSADFPLKQWLDEGIDIDELQLRIIQGLSTICDHKEKIVGTKPMREFEKSVMLQTLDHYWKEHLAAMDYLRKSVNLRGYVQKNPTQEYKHESFAMFTSMLDTINIEIVKSLSSVTINENTNVSDVEQENNEGVQVQHEEVETLGVNDAELEIAKQNKFQKRKKKVGRNDPCSCGSGKKYKKCHG</sequence>
<protein>
    <recommendedName>
        <fullName evidence="2">Protein translocase subunit SecA</fullName>
        <ecNumber evidence="2">7.4.2.8</ecNumber>
    </recommendedName>
</protein>
<comment type="function">
    <text evidence="1">Part of the Sec protein translocase complex. Interacts with the SecYEG preprotein conducting channel. Has a central role in coupling the hydrolysis of ATP to the transfer of proteins into and across the cell membrane, serving as an ATP-driven molecular motor driving the stepwise translocation of polypeptide chains across the membrane.</text>
</comment>
<comment type="catalytic activity">
    <reaction evidence="2">
        <text>ATP + H2O + cellular proteinSide 1 = ADP + phosphate + cellular proteinSide 2.</text>
        <dbReference type="EC" id="7.4.2.8"/>
    </reaction>
</comment>
<comment type="cofactor">
    <cofactor evidence="2 3">
        <name>Zn(2+)</name>
        <dbReference type="ChEBI" id="CHEBI:29105"/>
    </cofactor>
    <text evidence="2 3">May bind 1 zinc ion per subunit.</text>
</comment>
<comment type="subunit">
    <text evidence="2">Monomer and homodimer. Part of the essential Sec protein translocation apparatus which comprises SecA, SecYEG and auxiliary proteins SecDF-YajC and YidC.</text>
</comment>
<comment type="subcellular location">
    <subcellularLocation>
        <location evidence="2">Cell inner membrane</location>
        <topology evidence="2">Peripheral membrane protein</topology>
        <orientation evidence="2">Cytoplasmic side</orientation>
    </subcellularLocation>
    <subcellularLocation>
        <location evidence="2">Cytoplasm</location>
    </subcellularLocation>
    <text evidence="2">Distribution is 50-50.</text>
</comment>
<comment type="similarity">
    <text evidence="2 3">Belongs to the SecA family.</text>
</comment>
<reference key="1">
    <citation type="journal article" date="2007" name="Science">
        <title>The Calyptogena magnifica chemoautotrophic symbiont genome.</title>
        <authorList>
            <person name="Newton I.L.G."/>
            <person name="Woyke T."/>
            <person name="Auchtung T.A."/>
            <person name="Dilly G.F."/>
            <person name="Dutton R.J."/>
            <person name="Fisher M.C."/>
            <person name="Fontanez K.M."/>
            <person name="Lau E."/>
            <person name="Stewart F.J."/>
            <person name="Richardson P.M."/>
            <person name="Barry K.W."/>
            <person name="Saunders E."/>
            <person name="Detter J.C."/>
            <person name="Wu D."/>
            <person name="Eisen J.A."/>
            <person name="Cavanaugh C.M."/>
        </authorList>
    </citation>
    <scope>NUCLEOTIDE SEQUENCE [LARGE SCALE GENOMIC DNA]</scope>
</reference>
<evidence type="ECO:0000250" key="1"/>
<evidence type="ECO:0000255" key="2">
    <source>
        <dbReference type="HAMAP-Rule" id="MF_01382"/>
    </source>
</evidence>
<evidence type="ECO:0000305" key="3"/>
<name>SECA_RUTMC</name>
<feature type="chain" id="PRO_0000320981" description="Protein translocase subunit SecA">
    <location>
        <begin position="1"/>
        <end position="892"/>
    </location>
</feature>
<feature type="binding site" evidence="2">
    <location>
        <position position="89"/>
    </location>
    <ligand>
        <name>ATP</name>
        <dbReference type="ChEBI" id="CHEBI:30616"/>
    </ligand>
</feature>
<feature type="binding site" evidence="2">
    <location>
        <begin position="107"/>
        <end position="111"/>
    </location>
    <ligand>
        <name>ATP</name>
        <dbReference type="ChEBI" id="CHEBI:30616"/>
    </ligand>
</feature>
<feature type="binding site" evidence="2">
    <location>
        <position position="517"/>
    </location>
    <ligand>
        <name>ATP</name>
        <dbReference type="ChEBI" id="CHEBI:30616"/>
    </ligand>
</feature>
<feature type="binding site" evidence="2">
    <location>
        <position position="879"/>
    </location>
    <ligand>
        <name>Zn(2+)</name>
        <dbReference type="ChEBI" id="CHEBI:29105"/>
    </ligand>
</feature>
<feature type="binding site" evidence="2">
    <location>
        <position position="881"/>
    </location>
    <ligand>
        <name>Zn(2+)</name>
        <dbReference type="ChEBI" id="CHEBI:29105"/>
    </ligand>
</feature>
<feature type="binding site" evidence="2">
    <location>
        <position position="890"/>
    </location>
    <ligand>
        <name>Zn(2+)</name>
        <dbReference type="ChEBI" id="CHEBI:29105"/>
    </ligand>
</feature>
<feature type="binding site" evidence="2">
    <location>
        <position position="891"/>
    </location>
    <ligand>
        <name>Zn(2+)</name>
        <dbReference type="ChEBI" id="CHEBI:29105"/>
    </ligand>
</feature>
<accession>A1AV60</accession>